<comment type="function">
    <text evidence="1">Catalyzes the reversible conversion of 3-phosphohydroxypyruvate to phosphoserine and of 3-hydroxy-2-oxo-4-phosphonooxybutanoate to phosphohydroxythreonine.</text>
</comment>
<comment type="catalytic activity">
    <reaction evidence="1">
        <text>O-phospho-L-serine + 2-oxoglutarate = 3-phosphooxypyruvate + L-glutamate</text>
        <dbReference type="Rhea" id="RHEA:14329"/>
        <dbReference type="ChEBI" id="CHEBI:16810"/>
        <dbReference type="ChEBI" id="CHEBI:18110"/>
        <dbReference type="ChEBI" id="CHEBI:29985"/>
        <dbReference type="ChEBI" id="CHEBI:57524"/>
        <dbReference type="EC" id="2.6.1.52"/>
    </reaction>
</comment>
<comment type="catalytic activity">
    <reaction evidence="1">
        <text>4-(phosphooxy)-L-threonine + 2-oxoglutarate = (R)-3-hydroxy-2-oxo-4-phosphooxybutanoate + L-glutamate</text>
        <dbReference type="Rhea" id="RHEA:16573"/>
        <dbReference type="ChEBI" id="CHEBI:16810"/>
        <dbReference type="ChEBI" id="CHEBI:29985"/>
        <dbReference type="ChEBI" id="CHEBI:58452"/>
        <dbReference type="ChEBI" id="CHEBI:58538"/>
        <dbReference type="EC" id="2.6.1.52"/>
    </reaction>
</comment>
<comment type="cofactor">
    <cofactor evidence="1">
        <name>pyridoxal 5'-phosphate</name>
        <dbReference type="ChEBI" id="CHEBI:597326"/>
    </cofactor>
    <text evidence="1">Binds 1 pyridoxal phosphate per subunit.</text>
</comment>
<comment type="pathway">
    <text evidence="1">Amino-acid biosynthesis; L-serine biosynthesis; L-serine from 3-phospho-D-glycerate: step 2/3.</text>
</comment>
<comment type="pathway">
    <text evidence="1">Cofactor biosynthesis; pyridoxine 5'-phosphate biosynthesis; pyridoxine 5'-phosphate from D-erythrose 4-phosphate: step 3/5.</text>
</comment>
<comment type="subunit">
    <text evidence="1">Homodimer.</text>
</comment>
<comment type="subcellular location">
    <subcellularLocation>
        <location evidence="1">Cytoplasm</location>
    </subcellularLocation>
</comment>
<comment type="similarity">
    <text evidence="1">Belongs to the class-V pyridoxal-phosphate-dependent aminotransferase family. SerC subfamily.</text>
</comment>
<evidence type="ECO:0000255" key="1">
    <source>
        <dbReference type="HAMAP-Rule" id="MF_00160"/>
    </source>
</evidence>
<evidence type="ECO:0000256" key="2">
    <source>
        <dbReference type="SAM" id="MobiDB-lite"/>
    </source>
</evidence>
<protein>
    <recommendedName>
        <fullName>Putative phosphoserine aminotransferase</fullName>
        <ecNumber evidence="1">2.6.1.52</ecNumber>
    </recommendedName>
    <alternativeName>
        <fullName evidence="1">Phosphohydroxythreonine aminotransferase</fullName>
        <shortName evidence="1">PSAT</shortName>
    </alternativeName>
</protein>
<gene>
    <name evidence="1" type="primary">serC</name>
    <name type="ordered locus">Mjls_4847</name>
</gene>
<dbReference type="EC" id="2.6.1.52" evidence="1"/>
<dbReference type="EMBL" id="CP000580">
    <property type="protein sequence ID" value="ABO00613.1"/>
    <property type="molecule type" value="Genomic_DNA"/>
</dbReference>
<dbReference type="SMR" id="A3Q635"/>
<dbReference type="KEGG" id="mjl:Mjls_4847"/>
<dbReference type="HOGENOM" id="CLU_061974_0_0_11"/>
<dbReference type="BioCyc" id="MSP164757:G1G8C-4893-MONOMER"/>
<dbReference type="UniPathway" id="UPA00135">
    <property type="reaction ID" value="UER00197"/>
</dbReference>
<dbReference type="UniPathway" id="UPA00244">
    <property type="reaction ID" value="UER00311"/>
</dbReference>
<dbReference type="GO" id="GO:0005737">
    <property type="term" value="C:cytoplasm"/>
    <property type="evidence" value="ECO:0007669"/>
    <property type="project" value="UniProtKB-SubCell"/>
</dbReference>
<dbReference type="GO" id="GO:0008453">
    <property type="term" value="F:alanine-glyoxylate transaminase activity"/>
    <property type="evidence" value="ECO:0007669"/>
    <property type="project" value="TreeGrafter"/>
</dbReference>
<dbReference type="GO" id="GO:0004760">
    <property type="term" value="F:L-serine-pyruvate transaminase activity"/>
    <property type="evidence" value="ECO:0007669"/>
    <property type="project" value="TreeGrafter"/>
</dbReference>
<dbReference type="GO" id="GO:0004648">
    <property type="term" value="F:O-phospho-L-serine:2-oxoglutarate aminotransferase activity"/>
    <property type="evidence" value="ECO:0007669"/>
    <property type="project" value="UniProtKB-UniRule"/>
</dbReference>
<dbReference type="GO" id="GO:0030170">
    <property type="term" value="F:pyridoxal phosphate binding"/>
    <property type="evidence" value="ECO:0007669"/>
    <property type="project" value="UniProtKB-UniRule"/>
</dbReference>
<dbReference type="GO" id="GO:0019265">
    <property type="term" value="P:glycine biosynthetic process, by transamination of glyoxylate"/>
    <property type="evidence" value="ECO:0007669"/>
    <property type="project" value="TreeGrafter"/>
</dbReference>
<dbReference type="GO" id="GO:0006564">
    <property type="term" value="P:L-serine biosynthetic process"/>
    <property type="evidence" value="ECO:0007669"/>
    <property type="project" value="UniProtKB-UniRule"/>
</dbReference>
<dbReference type="GO" id="GO:0008615">
    <property type="term" value="P:pyridoxine biosynthetic process"/>
    <property type="evidence" value="ECO:0007669"/>
    <property type="project" value="UniProtKB-UniRule"/>
</dbReference>
<dbReference type="Gene3D" id="3.90.1150.10">
    <property type="entry name" value="Aspartate Aminotransferase, domain 1"/>
    <property type="match status" value="1"/>
</dbReference>
<dbReference type="Gene3D" id="3.40.640.10">
    <property type="entry name" value="Type I PLP-dependent aspartate aminotransferase-like (Major domain)"/>
    <property type="match status" value="1"/>
</dbReference>
<dbReference type="HAMAP" id="MF_00160">
    <property type="entry name" value="SerC_aminotrans_5"/>
    <property type="match status" value="1"/>
</dbReference>
<dbReference type="InterPro" id="IPR000192">
    <property type="entry name" value="Aminotrans_V_dom"/>
</dbReference>
<dbReference type="InterPro" id="IPR022278">
    <property type="entry name" value="Pser_aminoTfrase"/>
</dbReference>
<dbReference type="InterPro" id="IPR006272">
    <property type="entry name" value="Pser_aminoTfrase_mycobac"/>
</dbReference>
<dbReference type="InterPro" id="IPR015424">
    <property type="entry name" value="PyrdxlP-dep_Trfase"/>
</dbReference>
<dbReference type="InterPro" id="IPR015421">
    <property type="entry name" value="PyrdxlP-dep_Trfase_major"/>
</dbReference>
<dbReference type="InterPro" id="IPR015422">
    <property type="entry name" value="PyrdxlP-dep_Trfase_small"/>
</dbReference>
<dbReference type="NCBIfam" id="TIGR01366">
    <property type="entry name" value="serC_3"/>
    <property type="match status" value="1"/>
</dbReference>
<dbReference type="PANTHER" id="PTHR21152:SF40">
    <property type="entry name" value="ALANINE--GLYOXYLATE AMINOTRANSFERASE"/>
    <property type="match status" value="1"/>
</dbReference>
<dbReference type="PANTHER" id="PTHR21152">
    <property type="entry name" value="AMINOTRANSFERASE CLASS V"/>
    <property type="match status" value="1"/>
</dbReference>
<dbReference type="Pfam" id="PF00266">
    <property type="entry name" value="Aminotran_5"/>
    <property type="match status" value="1"/>
</dbReference>
<dbReference type="PIRSF" id="PIRSF000525">
    <property type="entry name" value="SerC"/>
    <property type="match status" value="1"/>
</dbReference>
<dbReference type="SUPFAM" id="SSF53383">
    <property type="entry name" value="PLP-dependent transferases"/>
    <property type="match status" value="1"/>
</dbReference>
<sequence>MAELTIPADLKPRDGRFGSGPSKVRPEQLQALAAAGDLFGTSHRQAPVKNLVGRVRDGIKQLFSVPEGYDVILGNGGSTAFWDAAAFGLIDKRSLHLTYGEFSAKFASAVAKNPFVGDPIVVKADPGSAPEPQSDPSVDVIAWAHNETSTGVAVPVQRPADSGDALIVIDATSGAGGLPVDIAQADAYYFAPQKNFAGDGGLWLAVVSPAALARIEAIGQSGRWVPDFLSLPIAVENSLKNQTYNTPAIGTLVLLADQLDWLNGNGGLDWAVKRTADSSQRLYSWAEASSYATPFVTDPALRSQVVGTIDFADDVDAAAVAKVLRANGIVDTEPYRKLGRNQLRVAMFAAVDPEDVSALTRCVDWVVERL</sequence>
<feature type="chain" id="PRO_0000293586" description="Putative phosphoserine aminotransferase">
    <location>
        <begin position="1"/>
        <end position="370"/>
    </location>
</feature>
<feature type="region of interest" description="Disordered" evidence="2">
    <location>
        <begin position="1"/>
        <end position="22"/>
    </location>
</feature>
<feature type="binding site" evidence="1">
    <location>
        <position position="44"/>
    </location>
    <ligand>
        <name>L-glutamate</name>
        <dbReference type="ChEBI" id="CHEBI:29985"/>
    </ligand>
</feature>
<feature type="binding site" evidence="1">
    <location>
        <position position="102"/>
    </location>
    <ligand>
        <name>pyridoxal 5'-phosphate</name>
        <dbReference type="ChEBI" id="CHEBI:597326"/>
    </ligand>
</feature>
<feature type="binding site" evidence="1">
    <location>
        <position position="148"/>
    </location>
    <ligand>
        <name>pyridoxal 5'-phosphate</name>
        <dbReference type="ChEBI" id="CHEBI:597326"/>
    </ligand>
</feature>
<feature type="binding site" evidence="1">
    <location>
        <position position="170"/>
    </location>
    <ligand>
        <name>pyridoxal 5'-phosphate</name>
        <dbReference type="ChEBI" id="CHEBI:597326"/>
    </ligand>
</feature>
<feature type="binding site" evidence="1">
    <location>
        <position position="193"/>
    </location>
    <ligand>
        <name>pyridoxal 5'-phosphate</name>
        <dbReference type="ChEBI" id="CHEBI:597326"/>
    </ligand>
</feature>
<feature type="binding site" evidence="1">
    <location>
        <begin position="245"/>
        <end position="246"/>
    </location>
    <ligand>
        <name>pyridoxal 5'-phosphate</name>
        <dbReference type="ChEBI" id="CHEBI:597326"/>
    </ligand>
</feature>
<feature type="modified residue" description="N6-(pyridoxal phosphate)lysine" evidence="1">
    <location>
        <position position="194"/>
    </location>
</feature>
<accession>A3Q635</accession>
<organism>
    <name type="scientific">Mycobacterium sp. (strain JLS)</name>
    <dbReference type="NCBI Taxonomy" id="164757"/>
    <lineage>
        <taxon>Bacteria</taxon>
        <taxon>Bacillati</taxon>
        <taxon>Actinomycetota</taxon>
        <taxon>Actinomycetes</taxon>
        <taxon>Mycobacteriales</taxon>
        <taxon>Mycobacteriaceae</taxon>
        <taxon>Mycobacterium</taxon>
    </lineage>
</organism>
<name>SERC_MYCSJ</name>
<keyword id="KW-0028">Amino-acid biosynthesis</keyword>
<keyword id="KW-0032">Aminotransferase</keyword>
<keyword id="KW-0963">Cytoplasm</keyword>
<keyword id="KW-0663">Pyridoxal phosphate</keyword>
<keyword id="KW-0664">Pyridoxine biosynthesis</keyword>
<keyword id="KW-0718">Serine biosynthesis</keyword>
<keyword id="KW-0808">Transferase</keyword>
<proteinExistence type="inferred from homology"/>
<reference key="1">
    <citation type="submission" date="2007-02" db="EMBL/GenBank/DDBJ databases">
        <title>Complete sequence of Mycobacterium sp. JLS.</title>
        <authorList>
            <consortium name="US DOE Joint Genome Institute"/>
            <person name="Copeland A."/>
            <person name="Lucas S."/>
            <person name="Lapidus A."/>
            <person name="Barry K."/>
            <person name="Detter J.C."/>
            <person name="Glavina del Rio T."/>
            <person name="Hammon N."/>
            <person name="Israni S."/>
            <person name="Dalin E."/>
            <person name="Tice H."/>
            <person name="Pitluck S."/>
            <person name="Chain P."/>
            <person name="Malfatti S."/>
            <person name="Shin M."/>
            <person name="Vergez L."/>
            <person name="Schmutz J."/>
            <person name="Larimer F."/>
            <person name="Land M."/>
            <person name="Hauser L."/>
            <person name="Kyrpides N."/>
            <person name="Mikhailova N."/>
            <person name="Miller C.D."/>
            <person name="Anderson A.J."/>
            <person name="Sims R.C."/>
            <person name="Richardson P."/>
        </authorList>
    </citation>
    <scope>NUCLEOTIDE SEQUENCE [LARGE SCALE GENOMIC DNA]</scope>
    <source>
        <strain>JLS</strain>
    </source>
</reference>